<reference key="1">
    <citation type="journal article" date="2002" name="Nature">
        <title>Comparison of the genomes of two Xanthomonas pathogens with differing host specificities.</title>
        <authorList>
            <person name="da Silva A.C.R."/>
            <person name="Ferro J.A."/>
            <person name="Reinach F.C."/>
            <person name="Farah C.S."/>
            <person name="Furlan L.R."/>
            <person name="Quaggio R.B."/>
            <person name="Monteiro-Vitorello C.B."/>
            <person name="Van Sluys M.A."/>
            <person name="Almeida N.F. Jr."/>
            <person name="Alves L.M.C."/>
            <person name="do Amaral A.M."/>
            <person name="Bertolini M.C."/>
            <person name="Camargo L.E.A."/>
            <person name="Camarotte G."/>
            <person name="Cannavan F."/>
            <person name="Cardozo J."/>
            <person name="Chambergo F."/>
            <person name="Ciapina L.P."/>
            <person name="Cicarelli R.M.B."/>
            <person name="Coutinho L.L."/>
            <person name="Cursino-Santos J.R."/>
            <person name="El-Dorry H."/>
            <person name="Faria J.B."/>
            <person name="Ferreira A.J.S."/>
            <person name="Ferreira R.C.C."/>
            <person name="Ferro M.I.T."/>
            <person name="Formighieri E.F."/>
            <person name="Franco M.C."/>
            <person name="Greggio C.C."/>
            <person name="Gruber A."/>
            <person name="Katsuyama A.M."/>
            <person name="Kishi L.T."/>
            <person name="Leite R.P."/>
            <person name="Lemos E.G.M."/>
            <person name="Lemos M.V.F."/>
            <person name="Locali E.C."/>
            <person name="Machado M.A."/>
            <person name="Madeira A.M.B.N."/>
            <person name="Martinez-Rossi N.M."/>
            <person name="Martins E.C."/>
            <person name="Meidanis J."/>
            <person name="Menck C.F.M."/>
            <person name="Miyaki C.Y."/>
            <person name="Moon D.H."/>
            <person name="Moreira L.M."/>
            <person name="Novo M.T.M."/>
            <person name="Okura V.K."/>
            <person name="Oliveira M.C."/>
            <person name="Oliveira V.R."/>
            <person name="Pereira H.A."/>
            <person name="Rossi A."/>
            <person name="Sena J.A.D."/>
            <person name="Silva C."/>
            <person name="de Souza R.F."/>
            <person name="Spinola L.A.F."/>
            <person name="Takita M.A."/>
            <person name="Tamura R.E."/>
            <person name="Teixeira E.C."/>
            <person name="Tezza R.I.D."/>
            <person name="Trindade dos Santos M."/>
            <person name="Truffi D."/>
            <person name="Tsai S.M."/>
            <person name="White F.F."/>
            <person name="Setubal J.C."/>
            <person name="Kitajima J.P."/>
        </authorList>
    </citation>
    <scope>NUCLEOTIDE SEQUENCE [LARGE SCALE GENOMIC DNA]</scope>
    <source>
        <strain>ATCC 33913 / DSM 3586 / NCPPB 528 / LMG 568 / P 25</strain>
    </source>
</reference>
<evidence type="ECO:0000255" key="1">
    <source>
        <dbReference type="HAMAP-Rule" id="MF_01024"/>
    </source>
</evidence>
<accession>Q8P9P2</accession>
<protein>
    <recommendedName>
        <fullName evidence="1">Histidinol dehydrogenase</fullName>
        <shortName evidence="1">HDH</shortName>
        <ecNumber evidence="1">1.1.1.23</ecNumber>
    </recommendedName>
</protein>
<dbReference type="EC" id="1.1.1.23" evidence="1"/>
<dbReference type="EMBL" id="AE008922">
    <property type="protein sequence ID" value="AAM41098.1"/>
    <property type="molecule type" value="Genomic_DNA"/>
</dbReference>
<dbReference type="RefSeq" id="NP_637174.1">
    <property type="nucleotide sequence ID" value="NC_003902.1"/>
</dbReference>
<dbReference type="RefSeq" id="WP_011036979.1">
    <property type="nucleotide sequence ID" value="NC_003902.1"/>
</dbReference>
<dbReference type="SMR" id="Q8P9P2"/>
<dbReference type="STRING" id="190485.XCC1809"/>
<dbReference type="EnsemblBacteria" id="AAM41098">
    <property type="protein sequence ID" value="AAM41098"/>
    <property type="gene ID" value="XCC1809"/>
</dbReference>
<dbReference type="KEGG" id="xcc:XCC1809"/>
<dbReference type="PATRIC" id="fig|190485.4.peg.1929"/>
<dbReference type="eggNOG" id="COG0141">
    <property type="taxonomic scope" value="Bacteria"/>
</dbReference>
<dbReference type="HOGENOM" id="CLU_006732_3_0_6"/>
<dbReference type="OrthoDB" id="9805269at2"/>
<dbReference type="UniPathway" id="UPA00031">
    <property type="reaction ID" value="UER00014"/>
</dbReference>
<dbReference type="Proteomes" id="UP000001010">
    <property type="component" value="Chromosome"/>
</dbReference>
<dbReference type="GO" id="GO:0005737">
    <property type="term" value="C:cytoplasm"/>
    <property type="evidence" value="ECO:0000318"/>
    <property type="project" value="GO_Central"/>
</dbReference>
<dbReference type="GO" id="GO:0005829">
    <property type="term" value="C:cytosol"/>
    <property type="evidence" value="ECO:0000318"/>
    <property type="project" value="GO_Central"/>
</dbReference>
<dbReference type="GO" id="GO:0004399">
    <property type="term" value="F:histidinol dehydrogenase activity"/>
    <property type="evidence" value="ECO:0000318"/>
    <property type="project" value="GO_Central"/>
</dbReference>
<dbReference type="GO" id="GO:0051287">
    <property type="term" value="F:NAD binding"/>
    <property type="evidence" value="ECO:0007669"/>
    <property type="project" value="InterPro"/>
</dbReference>
<dbReference type="GO" id="GO:0008270">
    <property type="term" value="F:zinc ion binding"/>
    <property type="evidence" value="ECO:0007669"/>
    <property type="project" value="UniProtKB-UniRule"/>
</dbReference>
<dbReference type="GO" id="GO:0000105">
    <property type="term" value="P:L-histidine biosynthetic process"/>
    <property type="evidence" value="ECO:0000318"/>
    <property type="project" value="GO_Central"/>
</dbReference>
<dbReference type="CDD" id="cd06572">
    <property type="entry name" value="Histidinol_dh"/>
    <property type="match status" value="1"/>
</dbReference>
<dbReference type="FunFam" id="3.40.50.1980:FF:000001">
    <property type="entry name" value="Histidinol dehydrogenase"/>
    <property type="match status" value="1"/>
</dbReference>
<dbReference type="Gene3D" id="1.20.5.1300">
    <property type="match status" value="1"/>
</dbReference>
<dbReference type="Gene3D" id="3.40.50.1980">
    <property type="entry name" value="Nitrogenase molybdenum iron protein domain"/>
    <property type="match status" value="2"/>
</dbReference>
<dbReference type="HAMAP" id="MF_01024">
    <property type="entry name" value="HisD"/>
    <property type="match status" value="1"/>
</dbReference>
<dbReference type="InterPro" id="IPR016161">
    <property type="entry name" value="Ald_DH/histidinol_DH"/>
</dbReference>
<dbReference type="InterPro" id="IPR001692">
    <property type="entry name" value="Histidinol_DH_CS"/>
</dbReference>
<dbReference type="InterPro" id="IPR022695">
    <property type="entry name" value="Histidinol_DH_monofunct"/>
</dbReference>
<dbReference type="InterPro" id="IPR012131">
    <property type="entry name" value="Hstdl_DH"/>
</dbReference>
<dbReference type="NCBIfam" id="TIGR00069">
    <property type="entry name" value="hisD"/>
    <property type="match status" value="1"/>
</dbReference>
<dbReference type="PANTHER" id="PTHR21256:SF2">
    <property type="entry name" value="HISTIDINE BIOSYNTHESIS TRIFUNCTIONAL PROTEIN"/>
    <property type="match status" value="1"/>
</dbReference>
<dbReference type="PANTHER" id="PTHR21256">
    <property type="entry name" value="HISTIDINOL DEHYDROGENASE HDH"/>
    <property type="match status" value="1"/>
</dbReference>
<dbReference type="Pfam" id="PF00815">
    <property type="entry name" value="Histidinol_dh"/>
    <property type="match status" value="1"/>
</dbReference>
<dbReference type="PIRSF" id="PIRSF000099">
    <property type="entry name" value="Histidinol_dh"/>
    <property type="match status" value="1"/>
</dbReference>
<dbReference type="PRINTS" id="PR00083">
    <property type="entry name" value="HOLDHDRGNASE"/>
</dbReference>
<dbReference type="SUPFAM" id="SSF53720">
    <property type="entry name" value="ALDH-like"/>
    <property type="match status" value="1"/>
</dbReference>
<dbReference type="PROSITE" id="PS00611">
    <property type="entry name" value="HISOL_DEHYDROGENASE"/>
    <property type="match status" value="1"/>
</dbReference>
<gene>
    <name evidence="1" type="primary">hisD</name>
    <name type="ordered locus">XCC1809</name>
</gene>
<comment type="function">
    <text evidence="1">Catalyzes the sequential NAD-dependent oxidations of L-histidinol to L-histidinaldehyde and then to L-histidine.</text>
</comment>
<comment type="catalytic activity">
    <reaction evidence="1">
        <text>L-histidinol + 2 NAD(+) + H2O = L-histidine + 2 NADH + 3 H(+)</text>
        <dbReference type="Rhea" id="RHEA:20641"/>
        <dbReference type="ChEBI" id="CHEBI:15377"/>
        <dbReference type="ChEBI" id="CHEBI:15378"/>
        <dbReference type="ChEBI" id="CHEBI:57540"/>
        <dbReference type="ChEBI" id="CHEBI:57595"/>
        <dbReference type="ChEBI" id="CHEBI:57699"/>
        <dbReference type="ChEBI" id="CHEBI:57945"/>
        <dbReference type="EC" id="1.1.1.23"/>
    </reaction>
</comment>
<comment type="cofactor">
    <cofactor evidence="1">
        <name>Zn(2+)</name>
        <dbReference type="ChEBI" id="CHEBI:29105"/>
    </cofactor>
    <text evidence="1">Binds 1 zinc ion per subunit.</text>
</comment>
<comment type="pathway">
    <text evidence="1">Amino-acid biosynthesis; L-histidine biosynthesis; L-histidine from 5-phospho-alpha-D-ribose 1-diphosphate: step 9/9.</text>
</comment>
<comment type="similarity">
    <text evidence="1">Belongs to the histidinol dehydrogenase family.</text>
</comment>
<name>HISX_XANCP</name>
<keyword id="KW-0028">Amino-acid biosynthesis</keyword>
<keyword id="KW-0368">Histidine biosynthesis</keyword>
<keyword id="KW-0479">Metal-binding</keyword>
<keyword id="KW-0520">NAD</keyword>
<keyword id="KW-0560">Oxidoreductase</keyword>
<keyword id="KW-1185">Reference proteome</keyword>
<keyword id="KW-0862">Zinc</keyword>
<sequence length="431" mass="44665">MNTLDWTQLTADARTQALTRPVQTVATQTREAVATLIADVRARGDVALREITARFDGVTLESFAVSDAEFAAADAAIAPELRQAMQDAVARIDTFHRAGMSEGYAVETAPGVVCEKIVRPIGRVGLYVPAGSAPLPSTALMLGVPARLAGCREVVLCTPPRKDGSVDPAVLVAAQLTGVRRVFKLGGAQAIAAMAYGTDSIPSCDKLFGPGNSFVTEAKQQVAQSGAAAIDMPAGPSEVLVIADAGAQPAFVAADLLSQAEHGPDSQVLLLSDSDALITAVQEQLDLQLAQLSRADIARQALAQSRLIKVATLQDAFEISNRYAPEHLILALREPRAWLAQVEAAGSVFLGDYTPEALGDYCSGTNHVLPTSGAARAYSGVSVASFQNMVSVQAASKAGIDGIGACAVILARAEGLDAHANAVALRMGVAA</sequence>
<organism>
    <name type="scientific">Xanthomonas campestris pv. campestris (strain ATCC 33913 / DSM 3586 / NCPPB 528 / LMG 568 / P 25)</name>
    <dbReference type="NCBI Taxonomy" id="190485"/>
    <lineage>
        <taxon>Bacteria</taxon>
        <taxon>Pseudomonadati</taxon>
        <taxon>Pseudomonadota</taxon>
        <taxon>Gammaproteobacteria</taxon>
        <taxon>Lysobacterales</taxon>
        <taxon>Lysobacteraceae</taxon>
        <taxon>Xanthomonas</taxon>
    </lineage>
</organism>
<proteinExistence type="inferred from homology"/>
<feature type="chain" id="PRO_0000135881" description="Histidinol dehydrogenase">
    <location>
        <begin position="1"/>
        <end position="431"/>
    </location>
</feature>
<feature type="active site" description="Proton acceptor" evidence="1">
    <location>
        <position position="326"/>
    </location>
</feature>
<feature type="active site" description="Proton acceptor" evidence="1">
    <location>
        <position position="327"/>
    </location>
</feature>
<feature type="binding site" evidence="1">
    <location>
        <position position="127"/>
    </location>
    <ligand>
        <name>NAD(+)</name>
        <dbReference type="ChEBI" id="CHEBI:57540"/>
    </ligand>
</feature>
<feature type="binding site" evidence="1">
    <location>
        <position position="189"/>
    </location>
    <ligand>
        <name>NAD(+)</name>
        <dbReference type="ChEBI" id="CHEBI:57540"/>
    </ligand>
</feature>
<feature type="binding site" evidence="1">
    <location>
        <position position="212"/>
    </location>
    <ligand>
        <name>NAD(+)</name>
        <dbReference type="ChEBI" id="CHEBI:57540"/>
    </ligand>
</feature>
<feature type="binding site" evidence="1">
    <location>
        <position position="237"/>
    </location>
    <ligand>
        <name>substrate</name>
    </ligand>
</feature>
<feature type="binding site" evidence="1">
    <location>
        <position position="259"/>
    </location>
    <ligand>
        <name>substrate</name>
    </ligand>
</feature>
<feature type="binding site" evidence="1">
    <location>
        <position position="259"/>
    </location>
    <ligand>
        <name>Zn(2+)</name>
        <dbReference type="ChEBI" id="CHEBI:29105"/>
    </ligand>
</feature>
<feature type="binding site" evidence="1">
    <location>
        <position position="262"/>
    </location>
    <ligand>
        <name>substrate</name>
    </ligand>
</feature>
<feature type="binding site" evidence="1">
    <location>
        <position position="262"/>
    </location>
    <ligand>
        <name>Zn(2+)</name>
        <dbReference type="ChEBI" id="CHEBI:29105"/>
    </ligand>
</feature>
<feature type="binding site" evidence="1">
    <location>
        <position position="327"/>
    </location>
    <ligand>
        <name>substrate</name>
    </ligand>
</feature>
<feature type="binding site" evidence="1">
    <location>
        <position position="360"/>
    </location>
    <ligand>
        <name>substrate</name>
    </ligand>
</feature>
<feature type="binding site" evidence="1">
    <location>
        <position position="360"/>
    </location>
    <ligand>
        <name>Zn(2+)</name>
        <dbReference type="ChEBI" id="CHEBI:29105"/>
    </ligand>
</feature>
<feature type="binding site" evidence="1">
    <location>
        <position position="414"/>
    </location>
    <ligand>
        <name>substrate</name>
    </ligand>
</feature>
<feature type="binding site" evidence="1">
    <location>
        <position position="419"/>
    </location>
    <ligand>
        <name>substrate</name>
    </ligand>
</feature>
<feature type="binding site" evidence="1">
    <location>
        <position position="419"/>
    </location>
    <ligand>
        <name>Zn(2+)</name>
        <dbReference type="ChEBI" id="CHEBI:29105"/>
    </ligand>
</feature>